<dbReference type="EMBL" id="U00096">
    <property type="protein sequence ID" value="AAC74663.2"/>
    <property type="molecule type" value="Genomic_DNA"/>
</dbReference>
<dbReference type="EMBL" id="AP009048">
    <property type="protein sequence ID" value="BAA15315.1"/>
    <property type="molecule type" value="Genomic_DNA"/>
</dbReference>
<dbReference type="PIR" id="A64915">
    <property type="entry name" value="A64915"/>
</dbReference>
<dbReference type="RefSeq" id="NP_416108.2">
    <property type="nucleotide sequence ID" value="NC_000913.3"/>
</dbReference>
<dbReference type="RefSeq" id="WP_000148710.1">
    <property type="nucleotide sequence ID" value="NZ_STEB01000003.1"/>
</dbReference>
<dbReference type="PDB" id="3CW0">
    <property type="method" value="X-ray"/>
    <property type="resolution" value="2.40 A"/>
    <property type="chains" value="A/B/C/D=1-204"/>
</dbReference>
<dbReference type="PDB" id="3EFP">
    <property type="method" value="X-ray"/>
    <property type="resolution" value="2.01 A"/>
    <property type="chains" value="A/B=1-204"/>
</dbReference>
<dbReference type="PDB" id="3U41">
    <property type="method" value="X-ray"/>
    <property type="resolution" value="2.50 A"/>
    <property type="chains" value="A/B/C/D/E/F/G/H=1-204"/>
</dbReference>
<dbReference type="PDBsum" id="3CW0"/>
<dbReference type="PDBsum" id="3EFP"/>
<dbReference type="PDBsum" id="3U41"/>
<dbReference type="BMRB" id="P69853"/>
<dbReference type="SMR" id="P69853"/>
<dbReference type="BioGRID" id="4259117">
    <property type="interactions" value="3"/>
</dbReference>
<dbReference type="DIP" id="DIP-47840N"/>
<dbReference type="FunCoup" id="P69853">
    <property type="interactions" value="18"/>
</dbReference>
<dbReference type="IntAct" id="P69853">
    <property type="interactions" value="11"/>
</dbReference>
<dbReference type="MINT" id="P69853"/>
<dbReference type="STRING" id="511145.b1591"/>
<dbReference type="jPOST" id="P69853"/>
<dbReference type="PaxDb" id="511145-b1591"/>
<dbReference type="EnsemblBacteria" id="AAC74663">
    <property type="protein sequence ID" value="AAC74663"/>
    <property type="gene ID" value="b1591"/>
</dbReference>
<dbReference type="GeneID" id="93775734"/>
<dbReference type="GeneID" id="945987"/>
<dbReference type="KEGG" id="ecj:JW5262"/>
<dbReference type="KEGG" id="eco:b1591"/>
<dbReference type="KEGG" id="ecoc:C3026_09165"/>
<dbReference type="PATRIC" id="fig|1411691.4.peg.671"/>
<dbReference type="EchoBASE" id="EB3608"/>
<dbReference type="eggNOG" id="COG3381">
    <property type="taxonomic scope" value="Bacteria"/>
</dbReference>
<dbReference type="HOGENOM" id="CLU_077650_7_1_6"/>
<dbReference type="InParanoid" id="P69853"/>
<dbReference type="OMA" id="AWHLLPW"/>
<dbReference type="OrthoDB" id="3174863at2"/>
<dbReference type="PhylomeDB" id="P69853"/>
<dbReference type="BioCyc" id="EcoCyc:G6849-MONOMER"/>
<dbReference type="EvolutionaryTrace" id="P69853"/>
<dbReference type="PRO" id="PR:P69853"/>
<dbReference type="Proteomes" id="UP000000625">
    <property type="component" value="Chromosome"/>
</dbReference>
<dbReference type="GO" id="GO:0005737">
    <property type="term" value="C:cytoplasm"/>
    <property type="evidence" value="ECO:0000315"/>
    <property type="project" value="EcoCyc"/>
</dbReference>
<dbReference type="GO" id="GO:0005886">
    <property type="term" value="C:plasma membrane"/>
    <property type="evidence" value="ECO:0007669"/>
    <property type="project" value="UniProtKB-SubCell"/>
</dbReference>
<dbReference type="GO" id="GO:0005048">
    <property type="term" value="F:signal sequence binding"/>
    <property type="evidence" value="ECO:0007669"/>
    <property type="project" value="InterPro"/>
</dbReference>
<dbReference type="GO" id="GO:0061077">
    <property type="term" value="P:chaperone-mediated protein folding"/>
    <property type="evidence" value="ECO:0007669"/>
    <property type="project" value="UniProtKB-UniRule"/>
</dbReference>
<dbReference type="GO" id="GO:0051604">
    <property type="term" value="P:protein maturation"/>
    <property type="evidence" value="ECO:0000315"/>
    <property type="project" value="EcoCyc"/>
</dbReference>
<dbReference type="FunFam" id="1.10.3480.10:FF:000002">
    <property type="entry name" value="Tat proofreading chaperone DmsD"/>
    <property type="match status" value="1"/>
</dbReference>
<dbReference type="Gene3D" id="1.10.3480.10">
    <property type="entry name" value="TorD-like"/>
    <property type="match status" value="1"/>
</dbReference>
<dbReference type="HAMAP" id="MF_00940">
    <property type="entry name" value="DmsD_chaperone"/>
    <property type="match status" value="1"/>
</dbReference>
<dbReference type="InterPro" id="IPR026269">
    <property type="entry name" value="DmsD-type"/>
</dbReference>
<dbReference type="InterPro" id="IPR028611">
    <property type="entry name" value="DmsD_chaperone"/>
</dbReference>
<dbReference type="InterPro" id="IPR020945">
    <property type="entry name" value="DMSO/NO3_reduct_chaperone"/>
</dbReference>
<dbReference type="InterPro" id="IPR036411">
    <property type="entry name" value="TorD-like_sf"/>
</dbReference>
<dbReference type="InterPro" id="IPR050289">
    <property type="entry name" value="TorD/DmsD_chaperones"/>
</dbReference>
<dbReference type="NCBIfam" id="NF008632">
    <property type="entry name" value="PRK11621.1"/>
    <property type="match status" value="1"/>
</dbReference>
<dbReference type="PANTHER" id="PTHR34227">
    <property type="entry name" value="CHAPERONE PROTEIN YCDY"/>
    <property type="match status" value="1"/>
</dbReference>
<dbReference type="PANTHER" id="PTHR34227:SF6">
    <property type="entry name" value="TAT PROOFREADING CHAPERONE DMSD"/>
    <property type="match status" value="1"/>
</dbReference>
<dbReference type="Pfam" id="PF02613">
    <property type="entry name" value="Nitrate_red_del"/>
    <property type="match status" value="1"/>
</dbReference>
<dbReference type="PIRSF" id="PIRSF004690">
    <property type="entry name" value="DmsD"/>
    <property type="match status" value="1"/>
</dbReference>
<dbReference type="SUPFAM" id="SSF89155">
    <property type="entry name" value="TorD-like"/>
    <property type="match status" value="1"/>
</dbReference>
<protein>
    <recommendedName>
        <fullName evidence="1">Tat proofreading chaperone DmsD</fullName>
    </recommendedName>
    <alternativeName>
        <fullName evidence="1">DMSO reductase maturation protein</fullName>
    </alternativeName>
    <alternativeName>
        <fullName evidence="1">Twin-arginine leader-binding protein DmsD</fullName>
    </alternativeName>
</protein>
<accession>P69853</accession>
<accession>P76174</accession>
<accession>P77270</accession>
<gene>
    <name evidence="1" type="primary">dmsD</name>
    <name type="synonym">ynfI</name>
    <name type="ordered locus">b1591</name>
    <name type="ordered locus">JW5262</name>
</gene>
<keyword id="KW-0002">3D-structure</keyword>
<keyword id="KW-0997">Cell inner membrane</keyword>
<keyword id="KW-1003">Cell membrane</keyword>
<keyword id="KW-0143">Chaperone</keyword>
<keyword id="KW-0963">Cytoplasm</keyword>
<keyword id="KW-0903">Direct protein sequencing</keyword>
<keyword id="KW-0472">Membrane</keyword>
<keyword id="KW-1185">Reference proteome</keyword>
<evidence type="ECO:0000255" key="1">
    <source>
        <dbReference type="HAMAP-Rule" id="MF_00940"/>
    </source>
</evidence>
<evidence type="ECO:0000269" key="2">
    <source>
    </source>
</evidence>
<evidence type="ECO:0000269" key="3">
    <source>
    </source>
</evidence>
<evidence type="ECO:0000269" key="4">
    <source>
    </source>
</evidence>
<evidence type="ECO:0000269" key="5">
    <source>
    </source>
</evidence>
<evidence type="ECO:0000269" key="6">
    <source>
    </source>
</evidence>
<evidence type="ECO:0000269" key="7">
    <source>
    </source>
</evidence>
<evidence type="ECO:0000305" key="8"/>
<evidence type="ECO:0007829" key="9">
    <source>
        <dbReference type="PDB" id="3EFP"/>
    </source>
</evidence>
<organism>
    <name type="scientific">Escherichia coli (strain K12)</name>
    <dbReference type="NCBI Taxonomy" id="83333"/>
    <lineage>
        <taxon>Bacteria</taxon>
        <taxon>Pseudomonadati</taxon>
        <taxon>Pseudomonadota</taxon>
        <taxon>Gammaproteobacteria</taxon>
        <taxon>Enterobacterales</taxon>
        <taxon>Enterobacteriaceae</taxon>
        <taxon>Escherichia</taxon>
    </lineage>
</organism>
<name>DMSD_ECOLI</name>
<comment type="function">
    <text evidence="1 2 3 4 6">Required for biogenesis/assembly of DMSO reductase, but not for the interaction of the DmsA signal peptide with the Tat system. May be part of a chaperone cascade complex that facilitates a folding-maturation pathway for the substrate protein.</text>
</comment>
<comment type="subunit">
    <text evidence="2 4 5 6 7">Monomer and homodimer. Binds to the twin-arginine signal peptide of DmsA and TorA (PubMed:11309116), although the latter binding is controversial (PubMed:20169075). Interacts with the TatB and TatC subunits of the Tat translocase complex. Also interacts with other general chaperones, such as GroEL, and proteins involved in the molybdenum cofactor biosynthesis.</text>
</comment>
<comment type="interaction">
    <interactant intactId="EBI-4406374">
        <id>P69853</id>
    </interactant>
    <interactant intactId="EBI-4411104">
        <id>P18775</id>
        <label>dmsA</label>
    </interactant>
    <organismsDiffer>false</organismsDiffer>
    <experiments>8</experiments>
</comment>
<comment type="interaction">
    <interactant intactId="EBI-4406374">
        <id>P69853</id>
    </interactant>
    <interactant intactId="EBI-556186">
        <id>P77374</id>
        <label>ynfE</label>
    </interactant>
    <organismsDiffer>false</organismsDiffer>
    <experiments>3</experiments>
</comment>
<comment type="interaction">
    <interactant intactId="EBI-4406374">
        <id>P69853</id>
    </interactant>
    <interactant intactId="EBI-6406285">
        <id>P77783</id>
        <label>ynfF</label>
    </interactant>
    <organismsDiffer>false</organismsDiffer>
    <experiments>3</experiments>
</comment>
<comment type="interaction">
    <interactant intactId="EBI-4406374">
        <id>P69853</id>
    </interactant>
    <interactant intactId="EBI-4406290">
        <id>C5A1D5</id>
        <label>groEL</label>
    </interactant>
    <organismsDiffer>true</organismsDiffer>
    <experiments>5</experiments>
</comment>
<comment type="interaction">
    <interactant intactId="EBI-4406374">
        <id>P69853</id>
    </interactant>
    <interactant intactId="EBI-4407105">
        <id>C4ZYN1</id>
        <label>grpE</label>
    </interactant>
    <organismsDiffer>true</organismsDiffer>
    <experiments>4</experiments>
</comment>
<comment type="interaction">
    <interactant intactId="EBI-4406374">
        <id>P69853</id>
    </interactant>
    <interactant intactId="EBI-4407188">
        <id>C4ZTJ3</id>
        <label>tig</label>
    </interactant>
    <organismsDiffer>true</organismsDiffer>
    <experiments>3</experiments>
</comment>
<comment type="subcellular location">
    <subcellularLocation>
        <location evidence="4">Cell inner membrane</location>
        <topology evidence="4">Peripheral membrane protein</topology>
    </subcellularLocation>
    <subcellularLocation>
        <location evidence="4">Cytoplasm</location>
    </subcellularLocation>
    <text>Mainly cytoplasmic under aerobic conditions, and found in the inner membrane under anaerobic conditions.</text>
</comment>
<comment type="similarity">
    <text evidence="1">Belongs to the TorD/DmsD family. DmsD subfamily.</text>
</comment>
<feature type="initiator methionine" description="Removed" evidence="2">
    <location>
        <position position="1"/>
    </location>
</feature>
<feature type="chain" id="PRO_0000211649" description="Tat proofreading chaperone DmsD">
    <location>
        <begin position="2"/>
        <end position="204"/>
    </location>
</feature>
<feature type="mutagenesis site" description="1.5-fold increased binding to DmsA signal sequence." evidence="7">
    <original>WQRL</original>
    <variation>HQRY</variation>
    <location>
        <begin position="72"/>
        <end position="75"/>
    </location>
</feature>
<feature type="sequence conflict" description="In Ref. 4; AA sequence." evidence="8" ref="4">
    <location>
        <position position="7"/>
    </location>
</feature>
<feature type="helix" evidence="9">
    <location>
        <begin position="4"/>
        <end position="6"/>
    </location>
</feature>
<feature type="helix" evidence="9">
    <location>
        <begin position="10"/>
        <end position="22"/>
    </location>
</feature>
<feature type="turn" evidence="9">
    <location>
        <begin position="28"/>
        <end position="30"/>
    </location>
</feature>
<feature type="helix" evidence="9">
    <location>
        <begin position="31"/>
        <end position="37"/>
    </location>
</feature>
<feature type="helix" evidence="9">
    <location>
        <begin position="42"/>
        <end position="45"/>
    </location>
</feature>
<feature type="strand" evidence="9">
    <location>
        <begin position="46"/>
        <end position="48"/>
    </location>
</feature>
<feature type="helix" evidence="9">
    <location>
        <begin position="50"/>
        <end position="60"/>
    </location>
</feature>
<feature type="helix" evidence="9">
    <location>
        <begin position="68"/>
        <end position="76"/>
    </location>
</feature>
<feature type="helix" evidence="9">
    <location>
        <begin position="88"/>
        <end position="92"/>
    </location>
</feature>
<feature type="helix" evidence="9">
    <location>
        <begin position="101"/>
        <end position="112"/>
    </location>
</feature>
<feature type="helix" evidence="9">
    <location>
        <begin position="128"/>
        <end position="140"/>
    </location>
</feature>
<feature type="helix" evidence="9">
    <location>
        <begin position="144"/>
        <end position="154"/>
    </location>
</feature>
<feature type="helix" evidence="9">
    <location>
        <begin position="156"/>
        <end position="169"/>
    </location>
</feature>
<feature type="helix" evidence="9">
    <location>
        <begin position="173"/>
        <end position="191"/>
    </location>
</feature>
<reference key="1">
    <citation type="journal article" date="1996" name="DNA Res.">
        <title>A 570-kb DNA sequence of the Escherichia coli K-12 genome corresponding to the 28.0-40.1 min region on the linkage map.</title>
        <authorList>
            <person name="Aiba H."/>
            <person name="Baba T."/>
            <person name="Fujita K."/>
            <person name="Hayashi K."/>
            <person name="Inada T."/>
            <person name="Isono K."/>
            <person name="Itoh T."/>
            <person name="Kasai H."/>
            <person name="Kashimoto K."/>
            <person name="Kimura S."/>
            <person name="Kitakawa M."/>
            <person name="Kitagawa M."/>
            <person name="Makino K."/>
            <person name="Miki T."/>
            <person name="Mizobuchi K."/>
            <person name="Mori H."/>
            <person name="Mori T."/>
            <person name="Motomura K."/>
            <person name="Nakade S."/>
            <person name="Nakamura Y."/>
            <person name="Nashimoto H."/>
            <person name="Nishio Y."/>
            <person name="Oshima T."/>
            <person name="Saito N."/>
            <person name="Sampei G."/>
            <person name="Seki Y."/>
            <person name="Sivasundaram S."/>
            <person name="Tagami H."/>
            <person name="Takeda J."/>
            <person name="Takemoto K."/>
            <person name="Takeuchi Y."/>
            <person name="Wada C."/>
            <person name="Yamamoto Y."/>
            <person name="Horiuchi T."/>
        </authorList>
    </citation>
    <scope>NUCLEOTIDE SEQUENCE [LARGE SCALE GENOMIC DNA]</scope>
    <source>
        <strain>K12 / W3110 / ATCC 27325 / DSM 5911</strain>
    </source>
</reference>
<reference key="2">
    <citation type="journal article" date="1997" name="Science">
        <title>The complete genome sequence of Escherichia coli K-12.</title>
        <authorList>
            <person name="Blattner F.R."/>
            <person name="Plunkett G. III"/>
            <person name="Bloch C.A."/>
            <person name="Perna N.T."/>
            <person name="Burland V."/>
            <person name="Riley M."/>
            <person name="Collado-Vides J."/>
            <person name="Glasner J.D."/>
            <person name="Rode C.K."/>
            <person name="Mayhew G.F."/>
            <person name="Gregor J."/>
            <person name="Davis N.W."/>
            <person name="Kirkpatrick H.A."/>
            <person name="Goeden M.A."/>
            <person name="Rose D.J."/>
            <person name="Mau B."/>
            <person name="Shao Y."/>
        </authorList>
    </citation>
    <scope>NUCLEOTIDE SEQUENCE [LARGE SCALE GENOMIC DNA]</scope>
    <source>
        <strain>K12 / MG1655 / ATCC 47076</strain>
    </source>
</reference>
<reference key="3">
    <citation type="journal article" date="2006" name="Mol. Syst. Biol.">
        <title>Highly accurate genome sequences of Escherichia coli K-12 strains MG1655 and W3110.</title>
        <authorList>
            <person name="Hayashi K."/>
            <person name="Morooka N."/>
            <person name="Yamamoto Y."/>
            <person name="Fujita K."/>
            <person name="Isono K."/>
            <person name="Choi S."/>
            <person name="Ohtsubo E."/>
            <person name="Baba T."/>
            <person name="Wanner B.L."/>
            <person name="Mori H."/>
            <person name="Horiuchi T."/>
        </authorList>
    </citation>
    <scope>NUCLEOTIDE SEQUENCE [LARGE SCALE GENOMIC DNA]</scope>
    <source>
        <strain>K12 / W3110 / ATCC 27325 / DSM 5911</strain>
    </source>
</reference>
<reference key="4">
    <citation type="journal article" date="2001" name="Mol. Microbiol.">
        <title>Identification of a twin-arginine leader-binding protein.</title>
        <authorList>
            <person name="Oresnik I.J."/>
            <person name="Ladner C.L."/>
            <person name="Turner R.J."/>
        </authorList>
    </citation>
    <scope>PROTEIN SEQUENCE OF 2-11</scope>
    <scope>FUNCTION</scope>
    <scope>INTERACTION WITH SIGNAL PEPTIDES OF DMSA AND TORA</scope>
</reference>
<reference key="5">
    <citation type="journal article" date="2003" name="FEBS Lett.">
        <title>DmsD is required for the biogenesis of DMSO reductase in Escherichia coli but not for the interaction of the DmsA signal peptide with the Tat apparatus.</title>
        <authorList>
            <person name="Ray N."/>
            <person name="Oates J."/>
            <person name="Turner R.J."/>
            <person name="Robinson C."/>
        </authorList>
    </citation>
    <scope>FUNCTION</scope>
</reference>
<reference key="6">
    <citation type="journal article" date="2003" name="J. Biol. Chem.">
        <title>The twin-arginine leader-binding protein, DmsD, interacts with the TatB and TatC subunits of the Escherichia coli twin-arginine translocase.</title>
        <authorList>
            <person name="Papish A.L."/>
            <person name="Ladner C.L."/>
            <person name="Turner R.J."/>
        </authorList>
    </citation>
    <scope>FUNCTION</scope>
    <scope>SUBCELLULAR LOCATION</scope>
    <scope>INTERACTION WITH TATB AND TATC</scope>
</reference>
<reference key="7">
    <citation type="journal article" date="2004" name="Biochem. Biophys. Res. Commun.">
        <title>Folding forms of Escherichia coli DmsD, a twin-arginine leader binding protein.</title>
        <authorList>
            <person name="Sarfo K.J."/>
            <person name="Winstone T.L."/>
            <person name="Papish A.L."/>
            <person name="Howell J.M."/>
            <person name="Kadir H."/>
            <person name="Vogel H.J."/>
            <person name="Turner R.J."/>
        </authorList>
    </citation>
    <scope>SUBUNIT</scope>
</reference>
<reference key="8">
    <citation type="journal article" date="2010" name="Biochim. Biophys. Acta">
        <title>DmsD, a Tat system specific chaperone, interacts with other general chaperones and proteins involved in the molybdenum cofactor biosynthesis.</title>
        <authorList>
            <person name="Li H."/>
            <person name="Chang L."/>
            <person name="Howell J.M."/>
            <person name="Turner R.J."/>
        </authorList>
    </citation>
    <scope>FUNCTION</scope>
    <scope>INTERACTION WITH CHAPERONES AND MOCO BIOSYNTHESIS PROTEINS</scope>
</reference>
<reference key="9">
    <citation type="journal article" date="2010" name="PLoS ONE">
        <title>Visualizing interactions along the Escherichia coli twin-arginine translocation pathway using protein fragment complementation.</title>
        <authorList>
            <person name="Kostecki J.S."/>
            <person name="Li H."/>
            <person name="Turner R.J."/>
            <person name="DeLisa M.P."/>
        </authorList>
    </citation>
    <scope>INTERACTION WITH DMSA; TATB AND TATC</scope>
    <scope>MUTAGENESIS OF 72-TRP--LEU-75</scope>
</reference>
<reference key="10">
    <citation type="journal article" date="2009" name="Acta Crystallogr. F">
        <title>Structure of the twin-arginine signal-binding protein DmsD from Escherichia coli.</title>
        <authorList>
            <person name="Ramasamy S.K."/>
            <person name="Clemons W.M. Jr."/>
        </authorList>
    </citation>
    <scope>X-RAY CRYSTALLOGRAPHY (2.40 ANGSTROMS)</scope>
</reference>
<reference key="11">
    <citation type="journal article" date="2009" name="J. Mol. Biol.">
        <title>Structural analysis of a monomeric form of the twin-arginine leader peptide binding chaperone Escherichia coli DmsD.</title>
        <authorList>
            <person name="Stevens C.M."/>
            <person name="Winstone T.M."/>
            <person name="Turner R.J."/>
            <person name="Paetzel M."/>
        </authorList>
    </citation>
    <scope>X-RAY CRYSTALLOGRAPHY (2.01 ANGSTROMS)</scope>
</reference>
<proteinExistence type="evidence at protein level"/>
<sequence>MTHFSQQDNFSVAARVLGALFYYAPESAEAAPLVAVLTSDGWETQWPLPEASLAPLVTAFQTQCEETHAQAWQRLFVGPWALPSPPWGSVWLDRESVLFGDSTLALRQWMREKGIQFEMKQNEPEDHFGSLLLMAAWLAENGRQTECEELLAWHLFPWSTRFLDVFIEKAEHPFYRALGELARLTLAQWQSQLLIPVAVKPLFR</sequence>